<dbReference type="EC" id="4.2.99.20" evidence="2"/>
<dbReference type="EMBL" id="M74538">
    <property type="protein sequence ID" value="AAC37015.1"/>
    <property type="status" value="ALT_FRAME"/>
    <property type="molecule type" value="Genomic_DNA"/>
</dbReference>
<dbReference type="EMBL" id="M74521">
    <property type="protein sequence ID" value="AAA50400.1"/>
    <property type="status" value="ALT_FRAME"/>
    <property type="molecule type" value="Genomic_DNA"/>
</dbReference>
<dbReference type="EMBL" id="AF008220">
    <property type="protein sequence ID" value="AAC00225.1"/>
    <property type="molecule type" value="Genomic_DNA"/>
</dbReference>
<dbReference type="EMBL" id="AL009126">
    <property type="protein sequence ID" value="CAB15059.1"/>
    <property type="molecule type" value="Genomic_DNA"/>
</dbReference>
<dbReference type="PIR" id="H70003">
    <property type="entry name" value="H70003"/>
</dbReference>
<dbReference type="RefSeq" id="NP_390959.1">
    <property type="nucleotide sequence ID" value="NC_000964.3"/>
</dbReference>
<dbReference type="RefSeq" id="WP_004398592.1">
    <property type="nucleotide sequence ID" value="NZ_OZ025638.1"/>
</dbReference>
<dbReference type="SMR" id="P23974"/>
<dbReference type="FunCoup" id="P23974">
    <property type="interactions" value="494"/>
</dbReference>
<dbReference type="STRING" id="224308.BSU30810"/>
<dbReference type="ESTHER" id="bacsu-ytxm">
    <property type="family name" value="MenH_SHCHC"/>
</dbReference>
<dbReference type="PaxDb" id="224308-BSU30810"/>
<dbReference type="EnsemblBacteria" id="CAB15059">
    <property type="protein sequence ID" value="CAB15059"/>
    <property type="gene ID" value="BSU_30810"/>
</dbReference>
<dbReference type="GeneID" id="937115"/>
<dbReference type="KEGG" id="bsu:BSU30810"/>
<dbReference type="PATRIC" id="fig|224308.179.peg.3339"/>
<dbReference type="eggNOG" id="COG0596">
    <property type="taxonomic scope" value="Bacteria"/>
</dbReference>
<dbReference type="InParanoid" id="P23974"/>
<dbReference type="OrthoDB" id="9808398at2"/>
<dbReference type="PhylomeDB" id="P23974"/>
<dbReference type="BioCyc" id="BSUB:BSU30810-MONOMER"/>
<dbReference type="UniPathway" id="UPA00079"/>
<dbReference type="UniPathway" id="UPA01057">
    <property type="reaction ID" value="UER00900"/>
</dbReference>
<dbReference type="Proteomes" id="UP000001570">
    <property type="component" value="Chromosome"/>
</dbReference>
<dbReference type="GO" id="GO:0016020">
    <property type="term" value="C:membrane"/>
    <property type="evidence" value="ECO:0000318"/>
    <property type="project" value="GO_Central"/>
</dbReference>
<dbReference type="GO" id="GO:0070205">
    <property type="term" value="F:2-succinyl-6-hydroxy-2,4-cyclohexadiene-1-carboxylate synthase activity"/>
    <property type="evidence" value="ECO:0007669"/>
    <property type="project" value="UniProtKB-UniRule"/>
</dbReference>
<dbReference type="GO" id="GO:0009234">
    <property type="term" value="P:menaquinone biosynthetic process"/>
    <property type="evidence" value="ECO:0007669"/>
    <property type="project" value="UniProtKB-UniRule"/>
</dbReference>
<dbReference type="Gene3D" id="3.40.50.1820">
    <property type="entry name" value="alpha/beta hydrolase"/>
    <property type="match status" value="1"/>
</dbReference>
<dbReference type="HAMAP" id="MF_01660">
    <property type="entry name" value="MenH"/>
    <property type="match status" value="1"/>
</dbReference>
<dbReference type="InterPro" id="IPR000073">
    <property type="entry name" value="AB_hydrolase_1"/>
</dbReference>
<dbReference type="InterPro" id="IPR029058">
    <property type="entry name" value="AB_hydrolase_fold"/>
</dbReference>
<dbReference type="InterPro" id="IPR000639">
    <property type="entry name" value="Epox_hydrolase-like"/>
</dbReference>
<dbReference type="InterPro" id="IPR022485">
    <property type="entry name" value="SHCHC_synthase_MenH"/>
</dbReference>
<dbReference type="NCBIfam" id="TIGR03695">
    <property type="entry name" value="menH_SHCHC"/>
    <property type="match status" value="1"/>
</dbReference>
<dbReference type="PANTHER" id="PTHR42916">
    <property type="entry name" value="2-SUCCINYL-5-ENOLPYRUVYL-6-HYDROXY-3-CYCLOHEXENE-1-CARBOXYLATE SYNTHASE"/>
    <property type="match status" value="1"/>
</dbReference>
<dbReference type="PANTHER" id="PTHR42916:SF1">
    <property type="entry name" value="PROTEIN PHYLLO, CHLOROPLASTIC"/>
    <property type="match status" value="1"/>
</dbReference>
<dbReference type="Pfam" id="PF00561">
    <property type="entry name" value="Abhydrolase_1"/>
    <property type="match status" value="1"/>
</dbReference>
<dbReference type="PRINTS" id="PR00111">
    <property type="entry name" value="ABHYDROLASE"/>
</dbReference>
<dbReference type="PRINTS" id="PR00412">
    <property type="entry name" value="EPOXHYDRLASE"/>
</dbReference>
<dbReference type="SUPFAM" id="SSF53474">
    <property type="entry name" value="alpha/beta-Hydrolases"/>
    <property type="match status" value="1"/>
</dbReference>
<accession>P23974</accession>
<accession>O34312</accession>
<gene>
    <name evidence="2" type="primary">menH</name>
    <name type="synonym">ytfB</name>
    <name type="synonym">ytxM</name>
    <name type="ordered locus">BSU30810</name>
</gene>
<sequence length="274" mass="30703">MGTVNITVSDGVRYAVADEGPNASEAVVCLHGFTGSKQSWTFLDEMLPDSRLIKIDCLGHGETDAPLNGKRYSTTRQVSDLAEIFDQLKLHKVKLIGYSMGGRLAYSFAMTYPERVSALVLESTTPGLKTLGERRERIMRDRKLADFILRDGLEAFVAYWENIPLFSSQQRLAEDIRYRIRSGRLRNNKIGLANSLTGMGTGSQPSLWSRVEEIDVPVLLICGEWDEKFCAINQEVHKMLPSSRIEIVPKAGHTVHVEQPRLFGKIVSEFLTSI</sequence>
<organism>
    <name type="scientific">Bacillus subtilis (strain 168)</name>
    <dbReference type="NCBI Taxonomy" id="224308"/>
    <lineage>
        <taxon>Bacteria</taxon>
        <taxon>Bacillati</taxon>
        <taxon>Bacillota</taxon>
        <taxon>Bacilli</taxon>
        <taxon>Bacillales</taxon>
        <taxon>Bacillaceae</taxon>
        <taxon>Bacillus</taxon>
    </lineage>
</organism>
<feature type="chain" id="PRO_0000207073" description="Putative 2-succinyl-6-hydroxy-2,4-cyclohexadiene-1-carboxylate synthase">
    <location>
        <begin position="1"/>
        <end position="274"/>
    </location>
</feature>
<feature type="domain" description="AB hydrolase-1" evidence="1">
    <location>
        <begin position="26"/>
        <end position="259"/>
    </location>
</feature>
<name>MENH_BACSU</name>
<evidence type="ECO:0000255" key="1"/>
<evidence type="ECO:0000255" key="2">
    <source>
        <dbReference type="HAMAP-Rule" id="MF_01660"/>
    </source>
</evidence>
<evidence type="ECO:0000305" key="3"/>
<protein>
    <recommendedName>
        <fullName evidence="2">Putative 2-succinyl-6-hydroxy-2,4-cyclohexadiene-1-carboxylate synthase</fullName>
        <shortName evidence="2">SHCHC synthase</shortName>
        <ecNumber evidence="2">4.2.99.20</ecNumber>
    </recommendedName>
</protein>
<reference key="1">
    <citation type="journal article" date="1995" name="Gene">
        <title>Structural organization of a Bacillus subtilis operon encoding menaquinone biosynthetic enzymes.</title>
        <authorList>
            <person name="Rowland B."/>
            <person name="Hill K."/>
            <person name="Miller P."/>
            <person name="Driscoll J.R."/>
            <person name="Taber H.W."/>
        </authorList>
    </citation>
    <scope>NUCLEOTIDE SEQUENCE [GENOMIC DNA]</scope>
    <source>
        <strain>168 / RB1</strain>
    </source>
</reference>
<reference key="2">
    <citation type="journal article" date="1997" name="Microbiology">
        <title>Sequencing and functional annotation of the Bacillus subtilis genes in the 200 kb rrnB-dnaB region.</title>
        <authorList>
            <person name="Lapidus A."/>
            <person name="Galleron N."/>
            <person name="Sorokin A."/>
            <person name="Ehrlich S.D."/>
        </authorList>
    </citation>
    <scope>NUCLEOTIDE SEQUENCE [GENOMIC DNA]</scope>
    <source>
        <strain>168</strain>
    </source>
</reference>
<reference key="3">
    <citation type="journal article" date="1997" name="Nature">
        <title>The complete genome sequence of the Gram-positive bacterium Bacillus subtilis.</title>
        <authorList>
            <person name="Kunst F."/>
            <person name="Ogasawara N."/>
            <person name="Moszer I."/>
            <person name="Albertini A.M."/>
            <person name="Alloni G."/>
            <person name="Azevedo V."/>
            <person name="Bertero M.G."/>
            <person name="Bessieres P."/>
            <person name="Bolotin A."/>
            <person name="Borchert S."/>
            <person name="Borriss R."/>
            <person name="Boursier L."/>
            <person name="Brans A."/>
            <person name="Braun M."/>
            <person name="Brignell S.C."/>
            <person name="Bron S."/>
            <person name="Brouillet S."/>
            <person name="Bruschi C.V."/>
            <person name="Caldwell B."/>
            <person name="Capuano V."/>
            <person name="Carter N.M."/>
            <person name="Choi S.-K."/>
            <person name="Codani J.-J."/>
            <person name="Connerton I.F."/>
            <person name="Cummings N.J."/>
            <person name="Daniel R.A."/>
            <person name="Denizot F."/>
            <person name="Devine K.M."/>
            <person name="Duesterhoeft A."/>
            <person name="Ehrlich S.D."/>
            <person name="Emmerson P.T."/>
            <person name="Entian K.-D."/>
            <person name="Errington J."/>
            <person name="Fabret C."/>
            <person name="Ferrari E."/>
            <person name="Foulger D."/>
            <person name="Fritz C."/>
            <person name="Fujita M."/>
            <person name="Fujita Y."/>
            <person name="Fuma S."/>
            <person name="Galizzi A."/>
            <person name="Galleron N."/>
            <person name="Ghim S.-Y."/>
            <person name="Glaser P."/>
            <person name="Goffeau A."/>
            <person name="Golightly E.J."/>
            <person name="Grandi G."/>
            <person name="Guiseppi G."/>
            <person name="Guy B.J."/>
            <person name="Haga K."/>
            <person name="Haiech J."/>
            <person name="Harwood C.R."/>
            <person name="Henaut A."/>
            <person name="Hilbert H."/>
            <person name="Holsappel S."/>
            <person name="Hosono S."/>
            <person name="Hullo M.-F."/>
            <person name="Itaya M."/>
            <person name="Jones L.-M."/>
            <person name="Joris B."/>
            <person name="Karamata D."/>
            <person name="Kasahara Y."/>
            <person name="Klaerr-Blanchard M."/>
            <person name="Klein C."/>
            <person name="Kobayashi Y."/>
            <person name="Koetter P."/>
            <person name="Koningstein G."/>
            <person name="Krogh S."/>
            <person name="Kumano M."/>
            <person name="Kurita K."/>
            <person name="Lapidus A."/>
            <person name="Lardinois S."/>
            <person name="Lauber J."/>
            <person name="Lazarevic V."/>
            <person name="Lee S.-M."/>
            <person name="Levine A."/>
            <person name="Liu H."/>
            <person name="Masuda S."/>
            <person name="Mauel C."/>
            <person name="Medigue C."/>
            <person name="Medina N."/>
            <person name="Mellado R.P."/>
            <person name="Mizuno M."/>
            <person name="Moestl D."/>
            <person name="Nakai S."/>
            <person name="Noback M."/>
            <person name="Noone D."/>
            <person name="O'Reilly M."/>
            <person name="Ogawa K."/>
            <person name="Ogiwara A."/>
            <person name="Oudega B."/>
            <person name="Park S.-H."/>
            <person name="Parro V."/>
            <person name="Pohl T.M."/>
            <person name="Portetelle D."/>
            <person name="Porwollik S."/>
            <person name="Prescott A.M."/>
            <person name="Presecan E."/>
            <person name="Pujic P."/>
            <person name="Purnelle B."/>
            <person name="Rapoport G."/>
            <person name="Rey M."/>
            <person name="Reynolds S."/>
            <person name="Rieger M."/>
            <person name="Rivolta C."/>
            <person name="Rocha E."/>
            <person name="Roche B."/>
            <person name="Rose M."/>
            <person name="Sadaie Y."/>
            <person name="Sato T."/>
            <person name="Scanlan E."/>
            <person name="Schleich S."/>
            <person name="Schroeter R."/>
            <person name="Scoffone F."/>
            <person name="Sekiguchi J."/>
            <person name="Sekowska A."/>
            <person name="Seror S.J."/>
            <person name="Serror P."/>
            <person name="Shin B.-S."/>
            <person name="Soldo B."/>
            <person name="Sorokin A."/>
            <person name="Tacconi E."/>
            <person name="Takagi T."/>
            <person name="Takahashi H."/>
            <person name="Takemaru K."/>
            <person name="Takeuchi M."/>
            <person name="Tamakoshi A."/>
            <person name="Tanaka T."/>
            <person name="Terpstra P."/>
            <person name="Tognoni A."/>
            <person name="Tosato V."/>
            <person name="Uchiyama S."/>
            <person name="Vandenbol M."/>
            <person name="Vannier F."/>
            <person name="Vassarotti A."/>
            <person name="Viari A."/>
            <person name="Wambutt R."/>
            <person name="Wedler E."/>
            <person name="Wedler H."/>
            <person name="Weitzenegger T."/>
            <person name="Winters P."/>
            <person name="Wipat A."/>
            <person name="Yamamoto H."/>
            <person name="Yamane K."/>
            <person name="Yasumoto K."/>
            <person name="Yata K."/>
            <person name="Yoshida K."/>
            <person name="Yoshikawa H.-F."/>
            <person name="Zumstein E."/>
            <person name="Yoshikawa H."/>
            <person name="Danchin A."/>
        </authorList>
    </citation>
    <scope>NUCLEOTIDE SEQUENCE [LARGE SCALE GENOMIC DNA]</scope>
    <source>
        <strain>168</strain>
    </source>
</reference>
<proteinExistence type="inferred from homology"/>
<comment type="function">
    <text evidence="2">Catalyzes a proton abstraction reaction that results in 2,5-elimination of pyruvate from 2-succinyl-5-enolpyruvyl-6-hydroxy-3-cyclohexene-1-carboxylate (SEPHCHC) and the formation of 2-succinyl-6-hydroxy-2,4-cyclohexadiene-1-carboxylate (SHCHC).</text>
</comment>
<comment type="catalytic activity">
    <reaction evidence="2">
        <text>5-enolpyruvoyl-6-hydroxy-2-succinyl-cyclohex-3-ene-1-carboxylate = (1R,6R)-6-hydroxy-2-succinyl-cyclohexa-2,4-diene-1-carboxylate + pyruvate</text>
        <dbReference type="Rhea" id="RHEA:25597"/>
        <dbReference type="ChEBI" id="CHEBI:15361"/>
        <dbReference type="ChEBI" id="CHEBI:58689"/>
        <dbReference type="ChEBI" id="CHEBI:58818"/>
        <dbReference type="EC" id="4.2.99.20"/>
    </reaction>
</comment>
<comment type="pathway">
    <text evidence="2">Quinol/quinone metabolism; 1,4-dihydroxy-2-naphthoate biosynthesis; 1,4-dihydroxy-2-naphthoate from chorismate: step 3/7.</text>
</comment>
<comment type="pathway">
    <text evidence="2">Quinol/quinone metabolism; menaquinone biosynthesis.</text>
</comment>
<comment type="subunit">
    <text evidence="2">Monomer.</text>
</comment>
<comment type="similarity">
    <text evidence="2">Belongs to the AB hydrolase superfamily. MenH family.</text>
</comment>
<comment type="sequence caution" evidence="3">
    <conflict type="frameshift">
        <sequence resource="EMBL-CDS" id="AAA50400"/>
    </conflict>
</comment>
<comment type="sequence caution" evidence="3">
    <conflict type="frameshift">
        <sequence resource="EMBL-CDS" id="AAC37015"/>
    </conflict>
</comment>
<keyword id="KW-0456">Lyase</keyword>
<keyword id="KW-0474">Menaquinone biosynthesis</keyword>
<keyword id="KW-1185">Reference proteome</keyword>